<gene>
    <name evidence="1" type="primary">recR</name>
    <name type="ordered locus">PsycPRwf_1728</name>
</gene>
<evidence type="ECO:0000255" key="1">
    <source>
        <dbReference type="HAMAP-Rule" id="MF_00017"/>
    </source>
</evidence>
<proteinExistence type="inferred from homology"/>
<accession>A5WG77</accession>
<sequence>MLTEKFDNLVKQLRVLPGVGQKTAQRMALHLLNGRRGQGSALAQALDIAMHEIIECRQCHSFSDDDICPICVDPRRDDSVLCVVETAADVMAIEQAAGYRGRYFVLGGHLSPLDGINADDLNIDQLVNRVKTAPVDEIILATSTTVEGQTTAHFIAEAVRRHVGKVTRIAQGIPMGGELEYLDSMTLSQALQNRS</sequence>
<comment type="function">
    <text evidence="1">May play a role in DNA repair. It seems to be involved in an RecBC-independent recombinational process of DNA repair. It may act with RecF and RecO.</text>
</comment>
<comment type="similarity">
    <text evidence="1">Belongs to the RecR family.</text>
</comment>
<feature type="chain" id="PRO_0000322936" description="Recombination protein RecR">
    <location>
        <begin position="1"/>
        <end position="195"/>
    </location>
</feature>
<feature type="domain" description="Toprim" evidence="1">
    <location>
        <begin position="79"/>
        <end position="174"/>
    </location>
</feature>
<feature type="zinc finger region" description="C4-type" evidence="1">
    <location>
        <begin position="56"/>
        <end position="71"/>
    </location>
</feature>
<keyword id="KW-0227">DNA damage</keyword>
<keyword id="KW-0233">DNA recombination</keyword>
<keyword id="KW-0234">DNA repair</keyword>
<keyword id="KW-0479">Metal-binding</keyword>
<keyword id="KW-0862">Zinc</keyword>
<keyword id="KW-0863">Zinc-finger</keyword>
<reference key="1">
    <citation type="submission" date="2007-05" db="EMBL/GenBank/DDBJ databases">
        <title>Complete sequence of chromosome of Psychrobacter sp. PRwf-1.</title>
        <authorList>
            <consortium name="US DOE Joint Genome Institute"/>
            <person name="Copeland A."/>
            <person name="Lucas S."/>
            <person name="Lapidus A."/>
            <person name="Barry K."/>
            <person name="Detter J.C."/>
            <person name="Glavina del Rio T."/>
            <person name="Hammon N."/>
            <person name="Israni S."/>
            <person name="Dalin E."/>
            <person name="Tice H."/>
            <person name="Pitluck S."/>
            <person name="Chain P."/>
            <person name="Malfatti S."/>
            <person name="Shin M."/>
            <person name="Vergez L."/>
            <person name="Schmutz J."/>
            <person name="Larimer F."/>
            <person name="Land M."/>
            <person name="Hauser L."/>
            <person name="Kyrpides N."/>
            <person name="Kim E."/>
            <person name="Tiedje J."/>
            <person name="Richardson P."/>
        </authorList>
    </citation>
    <scope>NUCLEOTIDE SEQUENCE [LARGE SCALE GENOMIC DNA]</scope>
    <source>
        <strain>PRwf-1</strain>
    </source>
</reference>
<dbReference type="EMBL" id="CP000713">
    <property type="protein sequence ID" value="ABQ94668.1"/>
    <property type="molecule type" value="Genomic_DNA"/>
</dbReference>
<dbReference type="SMR" id="A5WG77"/>
<dbReference type="STRING" id="349106.PsycPRwf_1728"/>
<dbReference type="KEGG" id="prw:PsycPRwf_1728"/>
<dbReference type="eggNOG" id="COG0353">
    <property type="taxonomic scope" value="Bacteria"/>
</dbReference>
<dbReference type="HOGENOM" id="CLU_060739_1_2_6"/>
<dbReference type="GO" id="GO:0003677">
    <property type="term" value="F:DNA binding"/>
    <property type="evidence" value="ECO:0007669"/>
    <property type="project" value="UniProtKB-UniRule"/>
</dbReference>
<dbReference type="GO" id="GO:0008270">
    <property type="term" value="F:zinc ion binding"/>
    <property type="evidence" value="ECO:0007669"/>
    <property type="project" value="UniProtKB-KW"/>
</dbReference>
<dbReference type="GO" id="GO:0006310">
    <property type="term" value="P:DNA recombination"/>
    <property type="evidence" value="ECO:0007669"/>
    <property type="project" value="UniProtKB-UniRule"/>
</dbReference>
<dbReference type="GO" id="GO:0006281">
    <property type="term" value="P:DNA repair"/>
    <property type="evidence" value="ECO:0007669"/>
    <property type="project" value="UniProtKB-UniRule"/>
</dbReference>
<dbReference type="CDD" id="cd01025">
    <property type="entry name" value="TOPRIM_recR"/>
    <property type="match status" value="1"/>
</dbReference>
<dbReference type="Gene3D" id="3.40.1360.10">
    <property type="match status" value="1"/>
</dbReference>
<dbReference type="Gene3D" id="6.10.250.240">
    <property type="match status" value="1"/>
</dbReference>
<dbReference type="Gene3D" id="1.10.8.420">
    <property type="entry name" value="RecR Domain 1"/>
    <property type="match status" value="1"/>
</dbReference>
<dbReference type="HAMAP" id="MF_00017">
    <property type="entry name" value="RecR"/>
    <property type="match status" value="1"/>
</dbReference>
<dbReference type="InterPro" id="IPR000093">
    <property type="entry name" value="DNA_Rcmb_RecR"/>
</dbReference>
<dbReference type="InterPro" id="IPR023627">
    <property type="entry name" value="Rcmb_RecR"/>
</dbReference>
<dbReference type="InterPro" id="IPR015967">
    <property type="entry name" value="Rcmb_RecR_Znf"/>
</dbReference>
<dbReference type="InterPro" id="IPR006171">
    <property type="entry name" value="TOPRIM_dom"/>
</dbReference>
<dbReference type="InterPro" id="IPR034137">
    <property type="entry name" value="TOPRIM_RecR"/>
</dbReference>
<dbReference type="NCBIfam" id="TIGR00615">
    <property type="entry name" value="recR"/>
    <property type="match status" value="1"/>
</dbReference>
<dbReference type="PANTHER" id="PTHR30446">
    <property type="entry name" value="RECOMBINATION PROTEIN RECR"/>
    <property type="match status" value="1"/>
</dbReference>
<dbReference type="PANTHER" id="PTHR30446:SF0">
    <property type="entry name" value="RECOMBINATION PROTEIN RECR"/>
    <property type="match status" value="1"/>
</dbReference>
<dbReference type="Pfam" id="PF21175">
    <property type="entry name" value="RecR_C"/>
    <property type="match status" value="1"/>
</dbReference>
<dbReference type="Pfam" id="PF21176">
    <property type="entry name" value="RecR_HhH"/>
    <property type="match status" value="1"/>
</dbReference>
<dbReference type="Pfam" id="PF02132">
    <property type="entry name" value="RecR_ZnF"/>
    <property type="match status" value="1"/>
</dbReference>
<dbReference type="Pfam" id="PF13662">
    <property type="entry name" value="Toprim_4"/>
    <property type="match status" value="1"/>
</dbReference>
<dbReference type="SMART" id="SM00493">
    <property type="entry name" value="TOPRIM"/>
    <property type="match status" value="1"/>
</dbReference>
<dbReference type="SUPFAM" id="SSF111304">
    <property type="entry name" value="Recombination protein RecR"/>
    <property type="match status" value="1"/>
</dbReference>
<dbReference type="PROSITE" id="PS01300">
    <property type="entry name" value="RECR"/>
    <property type="match status" value="1"/>
</dbReference>
<dbReference type="PROSITE" id="PS50880">
    <property type="entry name" value="TOPRIM"/>
    <property type="match status" value="1"/>
</dbReference>
<organism>
    <name type="scientific">Psychrobacter sp. (strain PRwf-1)</name>
    <dbReference type="NCBI Taxonomy" id="349106"/>
    <lineage>
        <taxon>Bacteria</taxon>
        <taxon>Pseudomonadati</taxon>
        <taxon>Pseudomonadota</taxon>
        <taxon>Gammaproteobacteria</taxon>
        <taxon>Moraxellales</taxon>
        <taxon>Moraxellaceae</taxon>
        <taxon>Psychrobacter</taxon>
    </lineage>
</organism>
<protein>
    <recommendedName>
        <fullName evidence="1">Recombination protein RecR</fullName>
    </recommendedName>
</protein>
<name>RECR_PSYWF</name>